<feature type="chain" id="PRO_1000139841" description="Chitooligosaccharide deacetylase">
    <location>
        <begin position="1"/>
        <end position="253"/>
    </location>
</feature>
<feature type="binding site" evidence="1">
    <location>
        <position position="61"/>
    </location>
    <ligand>
        <name>Mg(2+)</name>
        <dbReference type="ChEBI" id="CHEBI:18420"/>
    </ligand>
</feature>
<feature type="binding site" evidence="1">
    <location>
        <position position="126"/>
    </location>
    <ligand>
        <name>Mg(2+)</name>
        <dbReference type="ChEBI" id="CHEBI:18420"/>
    </ligand>
</feature>
<accession>A9R3W4</accession>
<sequence>MEKLLIVNADDFGLCKGQNYGIIDAFRNGVVSSTTAMMNSVDINHATELSAQYPALPVGMHFVLTFGRPLTAMPSLTDANGELGKWLWQRAGAGTLDLNEIAQELECQFERFSAVFGRPPTHIDSHHHVHMLPQIYPLVAAFAREKSLPLRIDRHEVQQHGLTLDNPRSSEWFNAGFYGENLSEPSFLQLLEHADQQGVNSLEIMCHPAFIDQTLMTSGYCYPRLTELAILTSPTLKPAIAQRGYRLGSFLDC</sequence>
<protein>
    <recommendedName>
        <fullName evidence="1">Chitooligosaccharide deacetylase</fullName>
        <shortName evidence="1">COD</shortName>
        <ecNumber evidence="1">3.5.1.105</ecNumber>
    </recommendedName>
    <alternativeName>
        <fullName evidence="1">Chitin disaccharide deacetylase</fullName>
    </alternativeName>
    <alternativeName>
        <fullName evidence="1">Chitobiose deacetylase</fullName>
    </alternativeName>
    <alternativeName>
        <fullName evidence="1">Chitobiose-6P deacetylase</fullName>
    </alternativeName>
    <alternativeName>
        <fullName evidence="1">Chitotriose deacetylase</fullName>
    </alternativeName>
    <alternativeName>
        <fullName evidence="1">Chitotriose-6P deacetylase</fullName>
    </alternativeName>
</protein>
<gene>
    <name evidence="1" type="primary">chbG</name>
    <name type="ordered locus">YpAngola_A3572</name>
</gene>
<keyword id="KW-0119">Carbohydrate metabolism</keyword>
<keyword id="KW-0146">Chitin degradation</keyword>
<keyword id="KW-0963">Cytoplasm</keyword>
<keyword id="KW-0378">Hydrolase</keyword>
<keyword id="KW-0460">Magnesium</keyword>
<keyword id="KW-0479">Metal-binding</keyword>
<keyword id="KW-0624">Polysaccharide degradation</keyword>
<name>CHBG_YERPG</name>
<comment type="function">
    <text evidence="1">Involved in the degradation of chitin. ChbG is essential for growth on the acetylated chitooligosaccharides chitobiose and chitotriose but is dispensable for growth on cellobiose and chitosan dimer, the deacetylated form of chitobiose. Deacetylation of chitobiose-6-P and chitotriose-6-P is necessary for both the activation of the chb promoter by the regulatory protein ChbR and the hydrolysis of phosphorylated beta-glucosides by the phospho-beta-glucosidase ChbF. Catalyzes the removal of only one acetyl group from chitobiose-6-P to yield monoacetylchitobiose-6-P, the inducer of ChbR and the substrate of ChbF.</text>
</comment>
<comment type="catalytic activity">
    <reaction evidence="1">
        <text>N,N'-diacetylchitobiose + H2O = N-acetyl-beta-D-glucosaminyl-(1-&gt;4)-D-glucosamine + acetate</text>
        <dbReference type="Rhea" id="RHEA:27469"/>
        <dbReference type="ChEBI" id="CHEBI:15377"/>
        <dbReference type="ChEBI" id="CHEBI:28681"/>
        <dbReference type="ChEBI" id="CHEBI:30089"/>
        <dbReference type="ChEBI" id="CHEBI:59910"/>
        <dbReference type="EC" id="3.5.1.105"/>
    </reaction>
</comment>
<comment type="catalytic activity">
    <reaction evidence="1">
        <text>diacetylchitobiose-6'-phosphate + H2O = N'-monoacetylchitobiose-6'-phosphate + acetate</text>
        <dbReference type="Rhea" id="RHEA:35083"/>
        <dbReference type="ChEBI" id="CHEBI:15377"/>
        <dbReference type="ChEBI" id="CHEBI:30089"/>
        <dbReference type="ChEBI" id="CHEBI:64883"/>
        <dbReference type="ChEBI" id="CHEBI:71315"/>
    </reaction>
</comment>
<comment type="cofactor">
    <cofactor evidence="1">
        <name>Mg(2+)</name>
        <dbReference type="ChEBI" id="CHEBI:18420"/>
    </cofactor>
</comment>
<comment type="pathway">
    <text evidence="1">Glycan degradation; chitin degradation.</text>
</comment>
<comment type="subunit">
    <text evidence="1">Homodimer.</text>
</comment>
<comment type="subcellular location">
    <subcellularLocation>
        <location evidence="1">Cytoplasm</location>
    </subcellularLocation>
</comment>
<comment type="similarity">
    <text evidence="1">Belongs to the YdjC deacetylase family. ChbG subfamily.</text>
</comment>
<proteinExistence type="inferred from homology"/>
<reference key="1">
    <citation type="journal article" date="2010" name="J. Bacteriol.">
        <title>Genome sequence of the deep-rooted Yersinia pestis strain Angola reveals new insights into the evolution and pangenome of the plague bacterium.</title>
        <authorList>
            <person name="Eppinger M."/>
            <person name="Worsham P.L."/>
            <person name="Nikolich M.P."/>
            <person name="Riley D.R."/>
            <person name="Sebastian Y."/>
            <person name="Mou S."/>
            <person name="Achtman M."/>
            <person name="Lindler L.E."/>
            <person name="Ravel J."/>
        </authorList>
    </citation>
    <scope>NUCLEOTIDE SEQUENCE [LARGE SCALE GENOMIC DNA]</scope>
    <source>
        <strain>Angola</strain>
    </source>
</reference>
<dbReference type="EC" id="3.5.1.105" evidence="1"/>
<dbReference type="EMBL" id="CP000901">
    <property type="protein sequence ID" value="ABX86742.1"/>
    <property type="molecule type" value="Genomic_DNA"/>
</dbReference>
<dbReference type="RefSeq" id="WP_012229977.1">
    <property type="nucleotide sequence ID" value="NC_010159.1"/>
</dbReference>
<dbReference type="SMR" id="A9R3W4"/>
<dbReference type="KEGG" id="ypg:YpAngola_A3572"/>
<dbReference type="PATRIC" id="fig|349746.12.peg.267"/>
<dbReference type="UniPathway" id="UPA00349"/>
<dbReference type="GO" id="GO:0005737">
    <property type="term" value="C:cytoplasm"/>
    <property type="evidence" value="ECO:0007669"/>
    <property type="project" value="UniProtKB-SubCell"/>
</dbReference>
<dbReference type="GO" id="GO:0036311">
    <property type="term" value="F:chitin disaccharide deacetylase activity"/>
    <property type="evidence" value="ECO:0007669"/>
    <property type="project" value="UniProtKB-UniRule"/>
</dbReference>
<dbReference type="GO" id="GO:0019213">
    <property type="term" value="F:deacetylase activity"/>
    <property type="evidence" value="ECO:0007669"/>
    <property type="project" value="TreeGrafter"/>
</dbReference>
<dbReference type="GO" id="GO:0046872">
    <property type="term" value="F:metal ion binding"/>
    <property type="evidence" value="ECO:0007669"/>
    <property type="project" value="UniProtKB-KW"/>
</dbReference>
<dbReference type="GO" id="GO:0006032">
    <property type="term" value="P:chitin catabolic process"/>
    <property type="evidence" value="ECO:0007669"/>
    <property type="project" value="UniProtKB-UniPathway"/>
</dbReference>
<dbReference type="GO" id="GO:0052777">
    <property type="term" value="P:diacetylchitobiose catabolic process"/>
    <property type="evidence" value="ECO:0007669"/>
    <property type="project" value="UniProtKB-UniRule"/>
</dbReference>
<dbReference type="GO" id="GO:0000272">
    <property type="term" value="P:polysaccharide catabolic process"/>
    <property type="evidence" value="ECO:0007669"/>
    <property type="project" value="UniProtKB-UniRule"/>
</dbReference>
<dbReference type="CDD" id="cd10803">
    <property type="entry name" value="YdjC_EF3048_like"/>
    <property type="match status" value="1"/>
</dbReference>
<dbReference type="Gene3D" id="3.20.20.370">
    <property type="entry name" value="Glycoside hydrolase/deacetylase"/>
    <property type="match status" value="1"/>
</dbReference>
<dbReference type="HAMAP" id="MF_01246">
    <property type="entry name" value="COD"/>
    <property type="match status" value="1"/>
</dbReference>
<dbReference type="InterPro" id="IPR022948">
    <property type="entry name" value="COD_ChbG_bac"/>
</dbReference>
<dbReference type="InterPro" id="IPR011330">
    <property type="entry name" value="Glyco_hydro/deAcase_b/a-brl"/>
</dbReference>
<dbReference type="InterPro" id="IPR006879">
    <property type="entry name" value="YdjC-like"/>
</dbReference>
<dbReference type="NCBIfam" id="NF002559">
    <property type="entry name" value="PRK02134.1"/>
    <property type="match status" value="1"/>
</dbReference>
<dbReference type="PANTHER" id="PTHR31609:SF1">
    <property type="entry name" value="CARBOHYDRATE DEACETYLASE"/>
    <property type="match status" value="1"/>
</dbReference>
<dbReference type="PANTHER" id="PTHR31609">
    <property type="entry name" value="YDJC DEACETYLASE FAMILY MEMBER"/>
    <property type="match status" value="1"/>
</dbReference>
<dbReference type="Pfam" id="PF04794">
    <property type="entry name" value="YdjC"/>
    <property type="match status" value="1"/>
</dbReference>
<dbReference type="SUPFAM" id="SSF88713">
    <property type="entry name" value="Glycoside hydrolase/deacetylase"/>
    <property type="match status" value="1"/>
</dbReference>
<organism>
    <name type="scientific">Yersinia pestis bv. Antiqua (strain Angola)</name>
    <dbReference type="NCBI Taxonomy" id="349746"/>
    <lineage>
        <taxon>Bacteria</taxon>
        <taxon>Pseudomonadati</taxon>
        <taxon>Pseudomonadota</taxon>
        <taxon>Gammaproteobacteria</taxon>
        <taxon>Enterobacterales</taxon>
        <taxon>Yersiniaceae</taxon>
        <taxon>Yersinia</taxon>
    </lineage>
</organism>
<evidence type="ECO:0000255" key="1">
    <source>
        <dbReference type="HAMAP-Rule" id="MF_01246"/>
    </source>
</evidence>